<name>HDG1_ARATH</name>
<evidence type="ECO:0000250" key="1">
    <source>
        <dbReference type="UniProtKB" id="Q0WV12"/>
    </source>
</evidence>
<evidence type="ECO:0000255" key="2"/>
<evidence type="ECO:0000255" key="3">
    <source>
        <dbReference type="PROSITE-ProRule" id="PRU00108"/>
    </source>
</evidence>
<evidence type="ECO:0000255" key="4">
    <source>
        <dbReference type="PROSITE-ProRule" id="PRU00197"/>
    </source>
</evidence>
<evidence type="ECO:0000256" key="5">
    <source>
        <dbReference type="SAM" id="MobiDB-lite"/>
    </source>
</evidence>
<evidence type="ECO:0000269" key="6">
    <source>
    </source>
</evidence>
<evidence type="ECO:0000269" key="7">
    <source>
    </source>
</evidence>
<evidence type="ECO:0000269" key="8">
    <source>
    </source>
</evidence>
<evidence type="ECO:0000269" key="9">
    <source>
    </source>
</evidence>
<evidence type="ECO:0000303" key="10">
    <source>
    </source>
</evidence>
<evidence type="ECO:0000303" key="11">
    <source>
    </source>
</evidence>
<evidence type="ECO:0000303" key="12">
    <source>
    </source>
</evidence>
<evidence type="ECO:0000305" key="13"/>
<evidence type="ECO:0000312" key="14">
    <source>
        <dbReference type="Araport" id="AT3G61150"/>
    </source>
</evidence>
<evidence type="ECO:0000312" key="15">
    <source>
        <dbReference type="EMBL" id="CAB71045.1"/>
    </source>
</evidence>
<gene>
    <name evidence="11" type="primary">HDG1</name>
    <name evidence="12" type="synonym">ASK-beta</name>
    <name evidence="10" type="synonym">HD-GL2-1</name>
    <name evidence="10" type="synonym">HDGL2-1</name>
    <name evidence="14" type="ordered locus">At3g61150</name>
    <name evidence="15" type="ORF">T20K12.50</name>
</gene>
<dbReference type="EMBL" id="AJ224338">
    <property type="protein sequence ID" value="CAB45018.1"/>
    <property type="molecule type" value="Genomic_DNA"/>
</dbReference>
<dbReference type="EMBL" id="AL137898">
    <property type="protein sequence ID" value="CAB71045.1"/>
    <property type="molecule type" value="Genomic_DNA"/>
</dbReference>
<dbReference type="EMBL" id="CP002686">
    <property type="protein sequence ID" value="AEE80161.1"/>
    <property type="molecule type" value="Genomic_DNA"/>
</dbReference>
<dbReference type="EMBL" id="AY050866">
    <property type="protein sequence ID" value="AAK92803.1"/>
    <property type="molecule type" value="mRNA"/>
</dbReference>
<dbReference type="EMBL" id="AY096757">
    <property type="protein sequence ID" value="AAM20391.1"/>
    <property type="molecule type" value="mRNA"/>
</dbReference>
<dbReference type="PIR" id="T47907">
    <property type="entry name" value="T47907"/>
</dbReference>
<dbReference type="RefSeq" id="NP_191674.1">
    <property type="nucleotide sequence ID" value="NM_115979.5"/>
</dbReference>
<dbReference type="SMR" id="Q9M2E8"/>
<dbReference type="BioGRID" id="10601">
    <property type="interactions" value="7"/>
</dbReference>
<dbReference type="FunCoup" id="Q9M2E8">
    <property type="interactions" value="8"/>
</dbReference>
<dbReference type="IntAct" id="Q9M2E8">
    <property type="interactions" value="10"/>
</dbReference>
<dbReference type="STRING" id="3702.Q9M2E8"/>
<dbReference type="iPTMnet" id="Q9M2E8"/>
<dbReference type="PaxDb" id="3702-AT3G61150.1"/>
<dbReference type="ProteomicsDB" id="230313"/>
<dbReference type="EnsemblPlants" id="AT3G61150.1">
    <property type="protein sequence ID" value="AT3G61150.1"/>
    <property type="gene ID" value="AT3G61150"/>
</dbReference>
<dbReference type="GeneID" id="825287"/>
<dbReference type="Gramene" id="AT3G61150.1">
    <property type="protein sequence ID" value="AT3G61150.1"/>
    <property type="gene ID" value="AT3G61150"/>
</dbReference>
<dbReference type="KEGG" id="ath:AT3G61150"/>
<dbReference type="Araport" id="AT3G61150"/>
<dbReference type="TAIR" id="AT3G61150">
    <property type="gene designation" value="HDG1"/>
</dbReference>
<dbReference type="eggNOG" id="ENOG502QUAY">
    <property type="taxonomic scope" value="Eukaryota"/>
</dbReference>
<dbReference type="HOGENOM" id="CLU_015002_2_1_1"/>
<dbReference type="InParanoid" id="Q9M2E8"/>
<dbReference type="OMA" id="NGGCMEE"/>
<dbReference type="PhylomeDB" id="Q9M2E8"/>
<dbReference type="PRO" id="PR:Q9M2E8"/>
<dbReference type="Proteomes" id="UP000006548">
    <property type="component" value="Chromosome 3"/>
</dbReference>
<dbReference type="ExpressionAtlas" id="Q9M2E8">
    <property type="expression patterns" value="baseline and differential"/>
</dbReference>
<dbReference type="GO" id="GO:0005634">
    <property type="term" value="C:nucleus"/>
    <property type="evidence" value="ECO:0007669"/>
    <property type="project" value="UniProtKB-SubCell"/>
</dbReference>
<dbReference type="GO" id="GO:0003700">
    <property type="term" value="F:DNA-binding transcription factor activity"/>
    <property type="evidence" value="ECO:0000250"/>
    <property type="project" value="TAIR"/>
</dbReference>
<dbReference type="GO" id="GO:0000981">
    <property type="term" value="F:DNA-binding transcription factor activity, RNA polymerase II-specific"/>
    <property type="evidence" value="ECO:0007669"/>
    <property type="project" value="InterPro"/>
</dbReference>
<dbReference type="GO" id="GO:0008289">
    <property type="term" value="F:lipid binding"/>
    <property type="evidence" value="ECO:0007669"/>
    <property type="project" value="InterPro"/>
</dbReference>
<dbReference type="GO" id="GO:0000976">
    <property type="term" value="F:transcription cis-regulatory region binding"/>
    <property type="evidence" value="ECO:0000353"/>
    <property type="project" value="TAIR"/>
</dbReference>
<dbReference type="GO" id="GO:0030154">
    <property type="term" value="P:cell differentiation"/>
    <property type="evidence" value="ECO:0000315"/>
    <property type="project" value="UniProtKB"/>
</dbReference>
<dbReference type="GO" id="GO:0042335">
    <property type="term" value="P:cuticle development"/>
    <property type="evidence" value="ECO:0000315"/>
    <property type="project" value="UniProtKB"/>
</dbReference>
<dbReference type="GO" id="GO:0048497">
    <property type="term" value="P:maintenance of floral organ identity"/>
    <property type="evidence" value="ECO:0000315"/>
    <property type="project" value="UniProtKB"/>
</dbReference>
<dbReference type="CDD" id="cd00086">
    <property type="entry name" value="homeodomain"/>
    <property type="match status" value="1"/>
</dbReference>
<dbReference type="CDD" id="cd08875">
    <property type="entry name" value="START_ArGLABRA2_like"/>
    <property type="match status" value="1"/>
</dbReference>
<dbReference type="FunFam" id="3.30.530.20:FF:000026">
    <property type="entry name" value="Homeobox-leucine zipper protein GLABRA 2"/>
    <property type="match status" value="1"/>
</dbReference>
<dbReference type="FunFam" id="1.10.10.60:FF:000229">
    <property type="entry name" value="Homeobox-leucine zipper protein HDG1"/>
    <property type="match status" value="1"/>
</dbReference>
<dbReference type="Gene3D" id="1.10.10.60">
    <property type="entry name" value="Homeodomain-like"/>
    <property type="match status" value="1"/>
</dbReference>
<dbReference type="InterPro" id="IPR042160">
    <property type="entry name" value="GLABRA2/ANL2/PDF2/ATML1-like"/>
</dbReference>
<dbReference type="InterPro" id="IPR001356">
    <property type="entry name" value="HD"/>
</dbReference>
<dbReference type="InterPro" id="IPR017970">
    <property type="entry name" value="Homeobox_CS"/>
</dbReference>
<dbReference type="InterPro" id="IPR009057">
    <property type="entry name" value="Homeodomain-like_sf"/>
</dbReference>
<dbReference type="InterPro" id="IPR002913">
    <property type="entry name" value="START_lipid-bd_dom"/>
</dbReference>
<dbReference type="PANTHER" id="PTHR45654:SF76">
    <property type="entry name" value="HOMEOBOX-LEUCINE ZIPPER PROTEIN HDG1"/>
    <property type="match status" value="1"/>
</dbReference>
<dbReference type="PANTHER" id="PTHR45654">
    <property type="entry name" value="HOMEOBOX-LEUCINE ZIPPER PROTEIN MERISTEM L1"/>
    <property type="match status" value="1"/>
</dbReference>
<dbReference type="Pfam" id="PF00046">
    <property type="entry name" value="Homeodomain"/>
    <property type="match status" value="1"/>
</dbReference>
<dbReference type="Pfam" id="PF01852">
    <property type="entry name" value="START"/>
    <property type="match status" value="1"/>
</dbReference>
<dbReference type="SMART" id="SM00389">
    <property type="entry name" value="HOX"/>
    <property type="match status" value="1"/>
</dbReference>
<dbReference type="SMART" id="SM00234">
    <property type="entry name" value="START"/>
    <property type="match status" value="1"/>
</dbReference>
<dbReference type="SUPFAM" id="SSF55961">
    <property type="entry name" value="Bet v1-like"/>
    <property type="match status" value="2"/>
</dbReference>
<dbReference type="SUPFAM" id="SSF46689">
    <property type="entry name" value="Homeodomain-like"/>
    <property type="match status" value="1"/>
</dbReference>
<dbReference type="PROSITE" id="PS00027">
    <property type="entry name" value="HOMEOBOX_1"/>
    <property type="match status" value="1"/>
</dbReference>
<dbReference type="PROSITE" id="PS50071">
    <property type="entry name" value="HOMEOBOX_2"/>
    <property type="match status" value="1"/>
</dbReference>
<dbReference type="PROSITE" id="PS50848">
    <property type="entry name" value="START"/>
    <property type="match status" value="1"/>
</dbReference>
<comment type="function">
    <text evidence="1 7 8 9">Probable transcription factor (By similarity). Promotes cuticle development probably by modulating the expression of the downstream genes BDG and FDH, possibly repressed in a CFL1-dependent manner (PubMed:21954461). Involved, together with PDF2, in the regulation of flower organs development by promoting the expression of APETALA 3 (AP3) in the epidermis and internal cell layers of developing flowers (PubMed:23590515). In opposition to BBM, seems to promote cell differentiation and giant cell identity via transcriptional repression of meristem and cell proliferation genes (PubMed:25564655).</text>
</comment>
<comment type="subunit">
    <text evidence="7 9">Interacts with CFL1 (PubMed:21954461). Binds with BBM (PubMed:25564655).</text>
</comment>
<comment type="subcellular location">
    <subcellularLocation>
        <location evidence="13">Nucleus</location>
    </subcellularLocation>
</comment>
<comment type="tissue specificity">
    <text evidence="6">Expressed in trichomes forming at the base of young leaves, in endodermal cell lines around emergent lateral roots and in the epidermal layer of the stamen filament.</text>
</comment>
<comment type="developmental stage">
    <text evidence="8 9">During embryogenesis, first observed at low levels in the embryo protoderm starting at the late globular stage (PubMed:25564655). In primary and lateral roots, observed in the epidermis, the outer layer of columella cells and lateral root cap (PubMed:25564655). Restricted to the epidermal cell layer during floral organ formation (PubMed:23590515). Also present in flower meristems, shoot apical mersitems (SAM) and leaf primordia (PubMed:25564655).</text>
</comment>
<comment type="disruption phenotype">
    <text evidence="7 8 9">Defective cuticle phenotypes leading to curly flag leaves and organ fusion (PubMed:21954461). The double mutant pdf2-1 hdg1-1 exhibits abnormal flowers with sepaloid petals and carpelloid stamens in association with a reduced expression of APETALA 3 (AP3) in the epidermis and internal cell layers of developing flowers (PubMed:23590515). Increased cell division leading to cell overproliferation (PubMed:25564655).</text>
</comment>
<comment type="similarity">
    <text evidence="13">Belongs to the HD-ZIP homeobox family. Class IV subfamily.</text>
</comment>
<proteinExistence type="evidence at protein level"/>
<reference key="1">
    <citation type="journal article" date="1998" name="Biochim. Biophys. Acta">
        <title>An evolutionary conserved group of plant GSK-3/shaggy-like protein kinase genes preferentially expressed in developing pollen.</title>
        <authorList>
            <person name="Tichtinsky G."/>
            <person name="Tavares R."/>
            <person name="Takvorian A."/>
            <person name="Schwebel-Dugue N."/>
            <person name="Twell D."/>
            <person name="Kreis M."/>
        </authorList>
    </citation>
    <scope>NUCLEOTIDE SEQUENCE [GENOMIC DNA]</scope>
    <source>
        <strain>cv. Columbia</strain>
    </source>
</reference>
<reference key="2">
    <citation type="journal article" date="2000" name="Nature">
        <title>Sequence and analysis of chromosome 3 of the plant Arabidopsis thaliana.</title>
        <authorList>
            <person name="Salanoubat M."/>
            <person name="Lemcke K."/>
            <person name="Rieger M."/>
            <person name="Ansorge W."/>
            <person name="Unseld M."/>
            <person name="Fartmann B."/>
            <person name="Valle G."/>
            <person name="Bloecker H."/>
            <person name="Perez-Alonso M."/>
            <person name="Obermaier B."/>
            <person name="Delseny M."/>
            <person name="Boutry M."/>
            <person name="Grivell L.A."/>
            <person name="Mache R."/>
            <person name="Puigdomenech P."/>
            <person name="De Simone V."/>
            <person name="Choisne N."/>
            <person name="Artiguenave F."/>
            <person name="Robert C."/>
            <person name="Brottier P."/>
            <person name="Wincker P."/>
            <person name="Cattolico L."/>
            <person name="Weissenbach J."/>
            <person name="Saurin W."/>
            <person name="Quetier F."/>
            <person name="Schaefer M."/>
            <person name="Mueller-Auer S."/>
            <person name="Gabel C."/>
            <person name="Fuchs M."/>
            <person name="Benes V."/>
            <person name="Wurmbach E."/>
            <person name="Drzonek H."/>
            <person name="Erfle H."/>
            <person name="Jordan N."/>
            <person name="Bangert S."/>
            <person name="Wiedelmann R."/>
            <person name="Kranz H."/>
            <person name="Voss H."/>
            <person name="Holland R."/>
            <person name="Brandt P."/>
            <person name="Nyakatura G."/>
            <person name="Vezzi A."/>
            <person name="D'Angelo M."/>
            <person name="Pallavicini A."/>
            <person name="Toppo S."/>
            <person name="Simionati B."/>
            <person name="Conrad A."/>
            <person name="Hornischer K."/>
            <person name="Kauer G."/>
            <person name="Loehnert T.-H."/>
            <person name="Nordsiek G."/>
            <person name="Reichelt J."/>
            <person name="Scharfe M."/>
            <person name="Schoen O."/>
            <person name="Bargues M."/>
            <person name="Terol J."/>
            <person name="Climent J."/>
            <person name="Navarro P."/>
            <person name="Collado C."/>
            <person name="Perez-Perez A."/>
            <person name="Ottenwaelder B."/>
            <person name="Duchemin D."/>
            <person name="Cooke R."/>
            <person name="Laudie M."/>
            <person name="Berger-Llauro C."/>
            <person name="Purnelle B."/>
            <person name="Masuy D."/>
            <person name="de Haan M."/>
            <person name="Maarse A.C."/>
            <person name="Alcaraz J.-P."/>
            <person name="Cottet A."/>
            <person name="Casacuberta E."/>
            <person name="Monfort A."/>
            <person name="Argiriou A."/>
            <person name="Flores M."/>
            <person name="Liguori R."/>
            <person name="Vitale D."/>
            <person name="Mannhaupt G."/>
            <person name="Haase D."/>
            <person name="Schoof H."/>
            <person name="Rudd S."/>
            <person name="Zaccaria P."/>
            <person name="Mewes H.-W."/>
            <person name="Mayer K.F.X."/>
            <person name="Kaul S."/>
            <person name="Town C.D."/>
            <person name="Koo H.L."/>
            <person name="Tallon L.J."/>
            <person name="Jenkins J."/>
            <person name="Rooney T."/>
            <person name="Rizzo M."/>
            <person name="Walts A."/>
            <person name="Utterback T."/>
            <person name="Fujii C.Y."/>
            <person name="Shea T.P."/>
            <person name="Creasy T.H."/>
            <person name="Haas B."/>
            <person name="Maiti R."/>
            <person name="Wu D."/>
            <person name="Peterson J."/>
            <person name="Van Aken S."/>
            <person name="Pai G."/>
            <person name="Militscher J."/>
            <person name="Sellers P."/>
            <person name="Gill J.E."/>
            <person name="Feldblyum T.V."/>
            <person name="Preuss D."/>
            <person name="Lin X."/>
            <person name="Nierman W.C."/>
            <person name="Salzberg S.L."/>
            <person name="White O."/>
            <person name="Venter J.C."/>
            <person name="Fraser C.M."/>
            <person name="Kaneko T."/>
            <person name="Nakamura Y."/>
            <person name="Sato S."/>
            <person name="Kato T."/>
            <person name="Asamizu E."/>
            <person name="Sasamoto S."/>
            <person name="Kimura T."/>
            <person name="Idesawa K."/>
            <person name="Kawashima K."/>
            <person name="Kishida Y."/>
            <person name="Kiyokawa C."/>
            <person name="Kohara M."/>
            <person name="Matsumoto M."/>
            <person name="Matsuno A."/>
            <person name="Muraki A."/>
            <person name="Nakayama S."/>
            <person name="Nakazaki N."/>
            <person name="Shinpo S."/>
            <person name="Takeuchi C."/>
            <person name="Wada T."/>
            <person name="Watanabe A."/>
            <person name="Yamada M."/>
            <person name="Yasuda M."/>
            <person name="Tabata S."/>
        </authorList>
    </citation>
    <scope>NUCLEOTIDE SEQUENCE [LARGE SCALE GENOMIC DNA]</scope>
    <source>
        <strain>cv. Columbia</strain>
    </source>
</reference>
<reference key="3">
    <citation type="journal article" date="2017" name="Plant J.">
        <title>Araport11: a complete reannotation of the Arabidopsis thaliana reference genome.</title>
        <authorList>
            <person name="Cheng C.Y."/>
            <person name="Krishnakumar V."/>
            <person name="Chan A.P."/>
            <person name="Thibaud-Nissen F."/>
            <person name="Schobel S."/>
            <person name="Town C.D."/>
        </authorList>
    </citation>
    <scope>GENOME REANNOTATION</scope>
    <source>
        <strain>cv. Columbia</strain>
    </source>
</reference>
<reference key="4">
    <citation type="journal article" date="2003" name="Science">
        <title>Empirical analysis of transcriptional activity in the Arabidopsis genome.</title>
        <authorList>
            <person name="Yamada K."/>
            <person name="Lim J."/>
            <person name="Dale J.M."/>
            <person name="Chen H."/>
            <person name="Shinn P."/>
            <person name="Palm C.J."/>
            <person name="Southwick A.M."/>
            <person name="Wu H.C."/>
            <person name="Kim C.J."/>
            <person name="Nguyen M."/>
            <person name="Pham P.K."/>
            <person name="Cheuk R.F."/>
            <person name="Karlin-Newmann G."/>
            <person name="Liu S.X."/>
            <person name="Lam B."/>
            <person name="Sakano H."/>
            <person name="Wu T."/>
            <person name="Yu G."/>
            <person name="Miranda M."/>
            <person name="Quach H.L."/>
            <person name="Tripp M."/>
            <person name="Chang C.H."/>
            <person name="Lee J.M."/>
            <person name="Toriumi M.J."/>
            <person name="Chan M.M."/>
            <person name="Tang C.C."/>
            <person name="Onodera C.S."/>
            <person name="Deng J.M."/>
            <person name="Akiyama K."/>
            <person name="Ansari Y."/>
            <person name="Arakawa T."/>
            <person name="Banh J."/>
            <person name="Banno F."/>
            <person name="Bowser L."/>
            <person name="Brooks S.Y."/>
            <person name="Carninci P."/>
            <person name="Chao Q."/>
            <person name="Choy N."/>
            <person name="Enju A."/>
            <person name="Goldsmith A.D."/>
            <person name="Gurjal M."/>
            <person name="Hansen N.F."/>
            <person name="Hayashizaki Y."/>
            <person name="Johnson-Hopson C."/>
            <person name="Hsuan V.W."/>
            <person name="Iida K."/>
            <person name="Karnes M."/>
            <person name="Khan S."/>
            <person name="Koesema E."/>
            <person name="Ishida J."/>
            <person name="Jiang P.X."/>
            <person name="Jones T."/>
            <person name="Kawai J."/>
            <person name="Kamiya A."/>
            <person name="Meyers C."/>
            <person name="Nakajima M."/>
            <person name="Narusaka M."/>
            <person name="Seki M."/>
            <person name="Sakurai T."/>
            <person name="Satou M."/>
            <person name="Tamse R."/>
            <person name="Vaysberg M."/>
            <person name="Wallender E.K."/>
            <person name="Wong C."/>
            <person name="Yamamura Y."/>
            <person name="Yuan S."/>
            <person name="Shinozaki K."/>
            <person name="Davis R.W."/>
            <person name="Theologis A."/>
            <person name="Ecker J.R."/>
        </authorList>
    </citation>
    <scope>NUCLEOTIDE SEQUENCE [LARGE SCALE MRNA]</scope>
    <source>
        <strain>cv. Columbia</strain>
    </source>
</reference>
<reference key="5">
    <citation type="journal article" date="2000" name="Plant Mol. Biol.">
        <title>Organization and structural evolution of four multigene families in Arabidopsis thaliana: AtLCAD, AtLGT, AtMYST and AtHD-GL2.</title>
        <authorList>
            <person name="Tavares R."/>
            <person name="Aubourg S."/>
            <person name="Lecharny A."/>
            <person name="Kreis M."/>
        </authorList>
    </citation>
    <scope>GENE FAMILY</scope>
</reference>
<reference key="6">
    <citation type="journal article" date="2006" name="Plant Physiol.">
        <title>Characterization of the class IV homeodomain-leucine zipper gene family in Arabidopsis.</title>
        <authorList>
            <person name="Nakamura M."/>
            <person name="Katsumata H."/>
            <person name="Abe M."/>
            <person name="Yabe N."/>
            <person name="Komeda Y."/>
            <person name="Yamamoto K.T."/>
            <person name="Takahashi T."/>
        </authorList>
    </citation>
    <scope>TISSUE SPECIFICITY</scope>
    <scope>GENE FAMILY</scope>
    <scope>NOMENCLATURE</scope>
</reference>
<reference key="7">
    <citation type="journal article" date="2011" name="Plant Cell">
        <title>CFL1, a WW domain protein, regulates cuticle development by modulating the function of HDG1, a class IV homeodomain transcription factor, in rice and Arabidopsis.</title>
        <authorList>
            <person name="Wu R."/>
            <person name="Li S."/>
            <person name="He S."/>
            <person name="Wassmann F."/>
            <person name="Yu C."/>
            <person name="Qin G."/>
            <person name="Schreiber L."/>
            <person name="Qu L.-J."/>
            <person name="Gu H."/>
        </authorList>
    </citation>
    <scope>FUNCTION</scope>
    <scope>DISRUPTION PHENOTYPE</scope>
    <scope>INTERACTION WITH CFL1</scope>
    <source>
        <strain>cv. Columbia</strain>
    </source>
</reference>
<reference key="8">
    <citation type="journal article" date="2013" name="Plant J.">
        <title>Mutations in epidermis-specific HD-ZIP IV genes affect floral organ identity in Arabidopsis thaliana.</title>
        <authorList>
            <person name="Kamata N."/>
            <person name="Okada H."/>
            <person name="Komeda Y."/>
            <person name="Takahashi T."/>
        </authorList>
    </citation>
    <scope>FUNCTION</scope>
    <scope>DISRUPTION PHENOTYPE</scope>
    <scope>DEVELOPMENTAL STAGE</scope>
    <source>
        <strain>cv. Columbia</strain>
    </source>
</reference>
<reference key="9">
    <citation type="journal article" date="2015" name="Development">
        <title>AIL and HDG proteins act antagonistically to control cell proliferation.</title>
        <authorList>
            <person name="Horstman A."/>
            <person name="Fukuoka H."/>
            <person name="Muino J.M."/>
            <person name="Nitsch L."/>
            <person name="Guo C."/>
            <person name="Passarinho P."/>
            <person name="Sanchez-Perez G."/>
            <person name="Immink R."/>
            <person name="Angenent G."/>
            <person name="Boutilier K."/>
        </authorList>
    </citation>
    <scope>FUNCTION</scope>
    <scope>DISRUPTION PHENOTYPE</scope>
    <scope>INTERACTION WITH BBM</scope>
    <scope>DEVELOPMENTAL STAGE</scope>
    <source>
        <strain>cv. Columbia</strain>
    </source>
</reference>
<keyword id="KW-0175">Coiled coil</keyword>
<keyword id="KW-0238">DNA-binding</keyword>
<keyword id="KW-0371">Homeobox</keyword>
<keyword id="KW-0539">Nucleus</keyword>
<keyword id="KW-1185">Reference proteome</keyword>
<keyword id="KW-0804">Transcription</keyword>
<keyword id="KW-0805">Transcription regulation</keyword>
<organism>
    <name type="scientific">Arabidopsis thaliana</name>
    <name type="common">Mouse-ear cress</name>
    <dbReference type="NCBI Taxonomy" id="3702"/>
    <lineage>
        <taxon>Eukaryota</taxon>
        <taxon>Viridiplantae</taxon>
        <taxon>Streptophyta</taxon>
        <taxon>Embryophyta</taxon>
        <taxon>Tracheophyta</taxon>
        <taxon>Spermatophyta</taxon>
        <taxon>Magnoliopsida</taxon>
        <taxon>eudicotyledons</taxon>
        <taxon>Gunneridae</taxon>
        <taxon>Pentapetalae</taxon>
        <taxon>rosids</taxon>
        <taxon>malvids</taxon>
        <taxon>Brassicales</taxon>
        <taxon>Brassicaceae</taxon>
        <taxon>Camelineae</taxon>
        <taxon>Arabidopsis</taxon>
    </lineage>
</organism>
<accession>Q9M2E8</accession>
<accession>Q9LFW5</accession>
<feature type="chain" id="PRO_0000331663" description="Homeobox-leucine zipper protein HDG1">
    <location>
        <begin position="1"/>
        <end position="808"/>
    </location>
</feature>
<feature type="domain" description="START" evidence="4">
    <location>
        <begin position="310"/>
        <end position="541"/>
    </location>
</feature>
<feature type="DNA-binding region" description="Homeobox" evidence="3">
    <location>
        <begin position="110"/>
        <end position="169"/>
    </location>
</feature>
<feature type="region of interest" description="Disordered" evidence="5">
    <location>
        <begin position="57"/>
        <end position="121"/>
    </location>
</feature>
<feature type="coiled-coil region" evidence="2">
    <location>
        <begin position="158"/>
        <end position="233"/>
    </location>
</feature>
<feature type="compositionally biased region" description="Basic and acidic residues" evidence="5">
    <location>
        <begin position="79"/>
        <end position="90"/>
    </location>
</feature>
<feature type="compositionally biased region" description="Basic residues" evidence="5">
    <location>
        <begin position="108"/>
        <end position="119"/>
    </location>
</feature>
<feature type="sequence conflict" description="In Ref. 1; CAB45018." evidence="13" ref="1">
    <original>E</original>
    <variation>K</variation>
    <location>
        <position position="597"/>
    </location>
</feature>
<protein>
    <recommendedName>
        <fullName evidence="11">Homeobox-leucine zipper protein HDG1</fullName>
    </recommendedName>
    <alternativeName>
        <fullName evidence="11">HD-ZIP protein HDG1</fullName>
    </alternativeName>
    <alternativeName>
        <fullName evidence="10">Homeodomain GLABRA 2-like protein 1</fullName>
        <shortName evidence="10">AtHD-GL2-1</shortName>
    </alternativeName>
    <alternativeName>
        <fullName evidence="11">Homeodomain transcription factor HDG1</fullName>
    </alternativeName>
    <alternativeName>
        <fullName evidence="11">Protein HOMEODOMAIN GLABROUS 1</fullName>
    </alternativeName>
</protein>
<sequence length="808" mass="88167">MNFNGFLDDGAGASKLLSDAPYNNHFSFSAVDTMLGSAAIAPSQSLPFSSSGLSLGLQTNGEMSRNGEIMESNVSRKSSRGEDVESRSESDNAEAVSGDDLDTSDRPLKKKKRYHRHTPKQIQDLESVFKECAHPDEKQRLDLSRRLNLDPRQVKFWFQNRRTQMKTQIERHENALLRQENDKLRAENMSVREAMRNPMCGNCGGPAVIGEISMEEQHLRIENSRLKDELDRVCALTGKFLGRSNGSHHIPDSALVLGVGVGSGGCNVGGGFTLSSPLLPQASPRFEISNGTGSGLVATVNRQQPVSVSDFDQRSRYLDLALAAMDELVKMAQTREPLWVRSSDSGFEVLNQEEYDTSFSRCVGPKQDGFVSEASKEAGTVIINSLALVETLMDSERWAEMFPSMVSRTSTTEIISSGMGGRNGALHLMHAELQLLSPLVPVRQVSFLRFCKQHAEGVWAVVDVSIDSIREGSSSSCRRLPSGCLVQDMANGYSKVTWIEHTEYDENHIHRLYRPLLRCGLAFGAHRWMAALQRQCECLTILMSSTVSTSTNPSPINCNGRKSMLKLAKRMTDNFCGGVCASSLQKWSKLNVGNVDEDVRIMTRKSVNNPGEPPGIILNAATSVWMPVSPRRLFDFLGNERLRSEWDILSNGGPMKEMAHIAKGHDRSNSVSLLRASAINANQSSMLILQETSIDAAGAVVVYAPVDIPAMQAVMNGGDSAYVALLPSGFAILPNGQAGTQRCAAEERNSIGNGGCMEEGGSLLTVAFQILVNSLPTAKLTVESVETVNNLISCTVQKIKAALHCDST</sequence>